<reference key="1">
    <citation type="journal article" date="2001" name="Mol. Biol. Evol.">
        <title>Mechanisms for evolving hypervariability: the case of conopeptides.</title>
        <authorList>
            <person name="Conticello S.G."/>
            <person name="Gilad Y."/>
            <person name="Avidan N."/>
            <person name="Ben-Asher E."/>
            <person name="Levy Z."/>
            <person name="Fainzilber M."/>
        </authorList>
    </citation>
    <scope>NUCLEOTIDE SEQUENCE [MRNA]</scope>
    <source>
        <tissue>Venom duct</tissue>
    </source>
</reference>
<keyword id="KW-1015">Disulfide bond</keyword>
<keyword id="KW-0960">Knottin</keyword>
<keyword id="KW-0528">Neurotoxin</keyword>
<keyword id="KW-0964">Secreted</keyword>
<keyword id="KW-0732">Signal</keyword>
<keyword id="KW-0800">Toxin</keyword>
<feature type="signal peptide" evidence="2">
    <location>
        <begin position="1"/>
        <end position="19"/>
    </location>
</feature>
<feature type="propeptide" id="PRO_0000404828" evidence="1">
    <location>
        <begin position="20"/>
        <end position="45"/>
    </location>
</feature>
<feature type="peptide" id="PRO_0000404829" description="Conotoxin PnMEKL-04">
    <location>
        <begin position="46"/>
        <end position="77"/>
    </location>
</feature>
<feature type="disulfide bond" evidence="1">
    <location>
        <begin position="51"/>
        <end position="65"/>
    </location>
</feature>
<feature type="disulfide bond" evidence="1">
    <location>
        <begin position="58"/>
        <end position="69"/>
    </location>
</feature>
<feature type="disulfide bond" evidence="1">
    <location>
        <begin position="64"/>
        <end position="73"/>
    </location>
</feature>
<accession>Q9BPA6</accession>
<comment type="subcellular location">
    <subcellularLocation>
        <location evidence="1">Secreted</location>
    </subcellularLocation>
</comment>
<comment type="tissue specificity">
    <text>Expressed by the venom duct.</text>
</comment>
<comment type="domain">
    <text evidence="1">The presence of a 'disulfide through disulfide knot' structurally defines this protein as a knottin.</text>
</comment>
<comment type="domain">
    <text>The cysteine framework is VI/VII (C-C-CC-C-C).</text>
</comment>
<comment type="similarity">
    <text evidence="3">Belongs to the conotoxin O2 superfamily.</text>
</comment>
<organism>
    <name type="scientific">Conus pennaceus</name>
    <name type="common">Feathered cone</name>
    <name type="synonym">Conus episcopus</name>
    <dbReference type="NCBI Taxonomy" id="37335"/>
    <lineage>
        <taxon>Eukaryota</taxon>
        <taxon>Metazoa</taxon>
        <taxon>Spiralia</taxon>
        <taxon>Lophotrochozoa</taxon>
        <taxon>Mollusca</taxon>
        <taxon>Gastropoda</taxon>
        <taxon>Caenogastropoda</taxon>
        <taxon>Neogastropoda</taxon>
        <taxon>Conoidea</taxon>
        <taxon>Conidae</taxon>
        <taxon>Conus</taxon>
        <taxon>Darioconus</taxon>
    </lineage>
</organism>
<proteinExistence type="evidence at transcript level"/>
<name>O269_CONPE</name>
<sequence length="77" mass="8566">MEKLTILLLVAAVLMSTQALPQGGGENRLKENIKFLLKRKTAADRGMWGDCDDWLAACTTPSQCCTEVCDGFCRLWE</sequence>
<protein>
    <recommendedName>
        <fullName>Conotoxin PnMEKL-04</fullName>
    </recommendedName>
</protein>
<evidence type="ECO:0000250" key="1"/>
<evidence type="ECO:0000255" key="2"/>
<evidence type="ECO:0000305" key="3"/>
<dbReference type="EMBL" id="AF215031">
    <property type="protein sequence ID" value="AAG60459.1"/>
    <property type="molecule type" value="mRNA"/>
</dbReference>
<dbReference type="ConoServer" id="718">
    <property type="toxin name" value="Pn6.9 precursor"/>
</dbReference>
<dbReference type="GO" id="GO:0005576">
    <property type="term" value="C:extracellular region"/>
    <property type="evidence" value="ECO:0007669"/>
    <property type="project" value="UniProtKB-SubCell"/>
</dbReference>
<dbReference type="GO" id="GO:0008200">
    <property type="term" value="F:ion channel inhibitor activity"/>
    <property type="evidence" value="ECO:0007669"/>
    <property type="project" value="InterPro"/>
</dbReference>
<dbReference type="GO" id="GO:0090729">
    <property type="term" value="F:toxin activity"/>
    <property type="evidence" value="ECO:0007669"/>
    <property type="project" value="UniProtKB-KW"/>
</dbReference>
<dbReference type="InterPro" id="IPR004214">
    <property type="entry name" value="Conotoxin"/>
</dbReference>
<dbReference type="Pfam" id="PF02950">
    <property type="entry name" value="Conotoxin"/>
    <property type="match status" value="1"/>
</dbReference>